<evidence type="ECO:0000255" key="1">
    <source>
        <dbReference type="HAMAP-Rule" id="MF_00054"/>
    </source>
</evidence>
<proteinExistence type="inferred from homology"/>
<name>EFG_SULDN</name>
<reference key="1">
    <citation type="journal article" date="2008" name="Appl. Environ. Microbiol.">
        <title>Genome of the epsilonproteobacterial chemolithoautotroph Sulfurimonas denitrificans.</title>
        <authorList>
            <person name="Sievert S.M."/>
            <person name="Scott K.M."/>
            <person name="Klotz M.G."/>
            <person name="Chain P.S.G."/>
            <person name="Hauser L.J."/>
            <person name="Hemp J."/>
            <person name="Huegler M."/>
            <person name="Land M."/>
            <person name="Lapidus A."/>
            <person name="Larimer F.W."/>
            <person name="Lucas S."/>
            <person name="Malfatti S.A."/>
            <person name="Meyer F."/>
            <person name="Paulsen I.T."/>
            <person name="Ren Q."/>
            <person name="Simon J."/>
            <person name="Bailey K."/>
            <person name="Diaz E."/>
            <person name="Fitzpatrick K.A."/>
            <person name="Glover B."/>
            <person name="Gwatney N."/>
            <person name="Korajkic A."/>
            <person name="Long A."/>
            <person name="Mobberley J.M."/>
            <person name="Pantry S.N."/>
            <person name="Pazder G."/>
            <person name="Peterson S."/>
            <person name="Quintanilla J.D."/>
            <person name="Sprinkle R."/>
            <person name="Stephens J."/>
            <person name="Thomas P."/>
            <person name="Vaughn R."/>
            <person name="Weber M.J."/>
            <person name="Wooten L.L."/>
        </authorList>
    </citation>
    <scope>NUCLEOTIDE SEQUENCE [LARGE SCALE GENOMIC DNA]</scope>
    <source>
        <strain>ATCC 33889 / DSM 1251</strain>
    </source>
</reference>
<comment type="function">
    <text evidence="1">Catalyzes the GTP-dependent ribosomal translocation step during translation elongation. During this step, the ribosome changes from the pre-translocational (PRE) to the post-translocational (POST) state as the newly formed A-site-bound peptidyl-tRNA and P-site-bound deacylated tRNA move to the P and E sites, respectively. Catalyzes the coordinated movement of the two tRNA molecules, the mRNA and conformational changes in the ribosome.</text>
</comment>
<comment type="subcellular location">
    <subcellularLocation>
        <location evidence="1">Cytoplasm</location>
    </subcellularLocation>
</comment>
<comment type="similarity">
    <text evidence="1">Belongs to the TRAFAC class translation factor GTPase superfamily. Classic translation factor GTPase family. EF-G/EF-2 subfamily.</text>
</comment>
<feature type="chain" id="PRO_0000263531" description="Elongation factor G">
    <location>
        <begin position="1"/>
        <end position="696"/>
    </location>
</feature>
<feature type="domain" description="tr-type G">
    <location>
        <begin position="8"/>
        <end position="286"/>
    </location>
</feature>
<feature type="binding site" evidence="1">
    <location>
        <begin position="17"/>
        <end position="24"/>
    </location>
    <ligand>
        <name>GTP</name>
        <dbReference type="ChEBI" id="CHEBI:37565"/>
    </ligand>
</feature>
<feature type="binding site" evidence="1">
    <location>
        <begin position="81"/>
        <end position="85"/>
    </location>
    <ligand>
        <name>GTP</name>
        <dbReference type="ChEBI" id="CHEBI:37565"/>
    </ligand>
</feature>
<feature type="binding site" evidence="1">
    <location>
        <begin position="135"/>
        <end position="138"/>
    </location>
    <ligand>
        <name>GTP</name>
        <dbReference type="ChEBI" id="CHEBI:37565"/>
    </ligand>
</feature>
<dbReference type="EMBL" id="CP000153">
    <property type="protein sequence ID" value="ABB43638.1"/>
    <property type="molecule type" value="Genomic_DNA"/>
</dbReference>
<dbReference type="RefSeq" id="WP_011371992.1">
    <property type="nucleotide sequence ID" value="NC_007575.1"/>
</dbReference>
<dbReference type="SMR" id="Q30TP3"/>
<dbReference type="STRING" id="326298.Suden_0357"/>
<dbReference type="KEGG" id="tdn:Suden_0357"/>
<dbReference type="eggNOG" id="COG0480">
    <property type="taxonomic scope" value="Bacteria"/>
</dbReference>
<dbReference type="HOGENOM" id="CLU_002794_4_1_7"/>
<dbReference type="OrthoDB" id="9804431at2"/>
<dbReference type="Proteomes" id="UP000002714">
    <property type="component" value="Chromosome"/>
</dbReference>
<dbReference type="GO" id="GO:0005737">
    <property type="term" value="C:cytoplasm"/>
    <property type="evidence" value="ECO:0007669"/>
    <property type="project" value="UniProtKB-SubCell"/>
</dbReference>
<dbReference type="GO" id="GO:0005525">
    <property type="term" value="F:GTP binding"/>
    <property type="evidence" value="ECO:0007669"/>
    <property type="project" value="UniProtKB-UniRule"/>
</dbReference>
<dbReference type="GO" id="GO:0003924">
    <property type="term" value="F:GTPase activity"/>
    <property type="evidence" value="ECO:0007669"/>
    <property type="project" value="InterPro"/>
</dbReference>
<dbReference type="GO" id="GO:0003746">
    <property type="term" value="F:translation elongation factor activity"/>
    <property type="evidence" value="ECO:0007669"/>
    <property type="project" value="UniProtKB-UniRule"/>
</dbReference>
<dbReference type="GO" id="GO:0032790">
    <property type="term" value="P:ribosome disassembly"/>
    <property type="evidence" value="ECO:0007669"/>
    <property type="project" value="TreeGrafter"/>
</dbReference>
<dbReference type="CDD" id="cd01886">
    <property type="entry name" value="EF-G"/>
    <property type="match status" value="1"/>
</dbReference>
<dbReference type="CDD" id="cd16262">
    <property type="entry name" value="EFG_III"/>
    <property type="match status" value="1"/>
</dbReference>
<dbReference type="CDD" id="cd01434">
    <property type="entry name" value="EFG_mtEFG1_IV"/>
    <property type="match status" value="1"/>
</dbReference>
<dbReference type="CDD" id="cd03713">
    <property type="entry name" value="EFG_mtEFG_C"/>
    <property type="match status" value="1"/>
</dbReference>
<dbReference type="CDD" id="cd04088">
    <property type="entry name" value="EFG_mtEFG_II"/>
    <property type="match status" value="1"/>
</dbReference>
<dbReference type="FunFam" id="2.40.30.10:FF:000006">
    <property type="entry name" value="Elongation factor G"/>
    <property type="match status" value="1"/>
</dbReference>
<dbReference type="FunFam" id="3.30.230.10:FF:000003">
    <property type="entry name" value="Elongation factor G"/>
    <property type="match status" value="1"/>
</dbReference>
<dbReference type="FunFam" id="3.30.70.240:FF:000001">
    <property type="entry name" value="Elongation factor G"/>
    <property type="match status" value="1"/>
</dbReference>
<dbReference type="FunFam" id="3.30.70.870:FF:000001">
    <property type="entry name" value="Elongation factor G"/>
    <property type="match status" value="1"/>
</dbReference>
<dbReference type="FunFam" id="3.40.50.300:FF:000029">
    <property type="entry name" value="Elongation factor G"/>
    <property type="match status" value="1"/>
</dbReference>
<dbReference type="Gene3D" id="3.30.230.10">
    <property type="match status" value="1"/>
</dbReference>
<dbReference type="Gene3D" id="3.30.70.240">
    <property type="match status" value="1"/>
</dbReference>
<dbReference type="Gene3D" id="3.30.70.870">
    <property type="entry name" value="Elongation Factor G (Translational Gtpase), domain 3"/>
    <property type="match status" value="1"/>
</dbReference>
<dbReference type="Gene3D" id="3.40.50.300">
    <property type="entry name" value="P-loop containing nucleotide triphosphate hydrolases"/>
    <property type="match status" value="1"/>
</dbReference>
<dbReference type="Gene3D" id="2.40.30.10">
    <property type="entry name" value="Translation factors"/>
    <property type="match status" value="1"/>
</dbReference>
<dbReference type="HAMAP" id="MF_00054_B">
    <property type="entry name" value="EF_G_EF_2_B"/>
    <property type="match status" value="1"/>
</dbReference>
<dbReference type="InterPro" id="IPR053905">
    <property type="entry name" value="EF-G-like_DII"/>
</dbReference>
<dbReference type="InterPro" id="IPR041095">
    <property type="entry name" value="EFG_II"/>
</dbReference>
<dbReference type="InterPro" id="IPR009022">
    <property type="entry name" value="EFG_III"/>
</dbReference>
<dbReference type="InterPro" id="IPR035647">
    <property type="entry name" value="EFG_III/V"/>
</dbReference>
<dbReference type="InterPro" id="IPR047872">
    <property type="entry name" value="EFG_IV"/>
</dbReference>
<dbReference type="InterPro" id="IPR035649">
    <property type="entry name" value="EFG_V"/>
</dbReference>
<dbReference type="InterPro" id="IPR000640">
    <property type="entry name" value="EFG_V-like"/>
</dbReference>
<dbReference type="InterPro" id="IPR031157">
    <property type="entry name" value="G_TR_CS"/>
</dbReference>
<dbReference type="InterPro" id="IPR027417">
    <property type="entry name" value="P-loop_NTPase"/>
</dbReference>
<dbReference type="InterPro" id="IPR020568">
    <property type="entry name" value="Ribosomal_Su5_D2-typ_SF"/>
</dbReference>
<dbReference type="InterPro" id="IPR014721">
    <property type="entry name" value="Ribsml_uS5_D2-typ_fold_subgr"/>
</dbReference>
<dbReference type="InterPro" id="IPR005225">
    <property type="entry name" value="Small_GTP-bd"/>
</dbReference>
<dbReference type="InterPro" id="IPR000795">
    <property type="entry name" value="T_Tr_GTP-bd_dom"/>
</dbReference>
<dbReference type="InterPro" id="IPR009000">
    <property type="entry name" value="Transl_B-barrel_sf"/>
</dbReference>
<dbReference type="InterPro" id="IPR004540">
    <property type="entry name" value="Transl_elong_EFG/EF2"/>
</dbReference>
<dbReference type="InterPro" id="IPR005517">
    <property type="entry name" value="Transl_elong_EFG/EF2_IV"/>
</dbReference>
<dbReference type="NCBIfam" id="TIGR00484">
    <property type="entry name" value="EF-G"/>
    <property type="match status" value="1"/>
</dbReference>
<dbReference type="NCBIfam" id="NF009379">
    <property type="entry name" value="PRK12740.1-3"/>
    <property type="match status" value="1"/>
</dbReference>
<dbReference type="NCBIfam" id="NF009381">
    <property type="entry name" value="PRK12740.1-5"/>
    <property type="match status" value="1"/>
</dbReference>
<dbReference type="NCBIfam" id="TIGR00231">
    <property type="entry name" value="small_GTP"/>
    <property type="match status" value="1"/>
</dbReference>
<dbReference type="PANTHER" id="PTHR43261:SF1">
    <property type="entry name" value="RIBOSOME-RELEASING FACTOR 2, MITOCHONDRIAL"/>
    <property type="match status" value="1"/>
</dbReference>
<dbReference type="PANTHER" id="PTHR43261">
    <property type="entry name" value="TRANSLATION ELONGATION FACTOR G-RELATED"/>
    <property type="match status" value="1"/>
</dbReference>
<dbReference type="Pfam" id="PF22042">
    <property type="entry name" value="EF-G_D2"/>
    <property type="match status" value="1"/>
</dbReference>
<dbReference type="Pfam" id="PF00679">
    <property type="entry name" value="EFG_C"/>
    <property type="match status" value="1"/>
</dbReference>
<dbReference type="Pfam" id="PF14492">
    <property type="entry name" value="EFG_III"/>
    <property type="match status" value="1"/>
</dbReference>
<dbReference type="Pfam" id="PF03764">
    <property type="entry name" value="EFG_IV"/>
    <property type="match status" value="1"/>
</dbReference>
<dbReference type="Pfam" id="PF00009">
    <property type="entry name" value="GTP_EFTU"/>
    <property type="match status" value="1"/>
</dbReference>
<dbReference type="PRINTS" id="PR00315">
    <property type="entry name" value="ELONGATNFCT"/>
</dbReference>
<dbReference type="SMART" id="SM00838">
    <property type="entry name" value="EFG_C"/>
    <property type="match status" value="1"/>
</dbReference>
<dbReference type="SMART" id="SM00889">
    <property type="entry name" value="EFG_IV"/>
    <property type="match status" value="1"/>
</dbReference>
<dbReference type="SUPFAM" id="SSF54980">
    <property type="entry name" value="EF-G C-terminal domain-like"/>
    <property type="match status" value="2"/>
</dbReference>
<dbReference type="SUPFAM" id="SSF52540">
    <property type="entry name" value="P-loop containing nucleoside triphosphate hydrolases"/>
    <property type="match status" value="1"/>
</dbReference>
<dbReference type="SUPFAM" id="SSF54211">
    <property type="entry name" value="Ribosomal protein S5 domain 2-like"/>
    <property type="match status" value="1"/>
</dbReference>
<dbReference type="SUPFAM" id="SSF50447">
    <property type="entry name" value="Translation proteins"/>
    <property type="match status" value="1"/>
</dbReference>
<dbReference type="PROSITE" id="PS00301">
    <property type="entry name" value="G_TR_1"/>
    <property type="match status" value="1"/>
</dbReference>
<dbReference type="PROSITE" id="PS51722">
    <property type="entry name" value="G_TR_2"/>
    <property type="match status" value="1"/>
</dbReference>
<keyword id="KW-0963">Cytoplasm</keyword>
<keyword id="KW-0251">Elongation factor</keyword>
<keyword id="KW-0342">GTP-binding</keyword>
<keyword id="KW-0547">Nucleotide-binding</keyword>
<keyword id="KW-0648">Protein biosynthesis</keyword>
<keyword id="KW-1185">Reference proteome</keyword>
<sequence length="696" mass="76943">MARSHKLEDVRNIGIAAHIDAGKTTTTERILFYTGREHKIGEVHDGAATMDWMEQEQERGITITSAATTCEWAGKQINIIDTPGHVDFTIEVERSMRVLDGAVSVFCAVGGVQPQSETVWRQRNRYGVPSIVFVNKMDRTGANFYAVEEQIRTRLKGNPVPIQIPIGEEDNFLGVIDLVKMKAIVWDVDAAMGSNYHVEEIPANLLQKAQEYREKMIESISEVDGNEHLAEKYLEGEELSEDEIIAGIKAATIGMHIVPMTAGTSFKNKGVQTLLDAVVAYLPAPTECAPIKGTMMDDEDEEVIVPSTDSGEFASLAFKIMTDPFVGTLTFIRVYRGSLEAGSFVHNSTKDKKERIGRIVKMHAVKREDIKEIYAGEIGAVVGLKYTTTGDTLCSEADKVILERMTFPEPVISVAVEPKTKADQEKMGLALAKLAAEDPSFKVHTDEETGQTIISGMGELHLEILVDRMKREFKVEAEVGAPQVSYRETIRDTVNQEYKYAKQSGGRGAFGHVYLTIKPGDAGTGFVFHNEIKGGVIPKEYIPAVEKGCAETMSNGVLAGYPMEDIDITLYDGSYHEVDSNEMAFKLAASMGFKEGCRKARPAILEPLMKVEVEVPEDYMGDVIGDLNRRRGQVTNMGDRSGNKIVDAFVPLAEMFGYSTDLRSATQGRATYSMEFDHYEEVPKNVSEEIIKKRNG</sequence>
<organism>
    <name type="scientific">Sulfurimonas denitrificans (strain ATCC 33889 / DSM 1251)</name>
    <name type="common">Thiomicrospira denitrificans (strain ATCC 33889 / DSM 1251)</name>
    <dbReference type="NCBI Taxonomy" id="326298"/>
    <lineage>
        <taxon>Bacteria</taxon>
        <taxon>Pseudomonadati</taxon>
        <taxon>Campylobacterota</taxon>
        <taxon>Epsilonproteobacteria</taxon>
        <taxon>Campylobacterales</taxon>
        <taxon>Sulfurimonadaceae</taxon>
        <taxon>Sulfurimonas</taxon>
    </lineage>
</organism>
<gene>
    <name evidence="1" type="primary">fusA</name>
    <name type="ordered locus">Suden_0357</name>
</gene>
<accession>Q30TP3</accession>
<protein>
    <recommendedName>
        <fullName evidence="1">Elongation factor G</fullName>
        <shortName evidence="1">EF-G</shortName>
    </recommendedName>
</protein>